<feature type="chain" id="PRO_0000139947" description="Ribonuclease PH">
    <location>
        <begin position="1"/>
        <end position="238"/>
    </location>
</feature>
<feature type="binding site" evidence="1">
    <location>
        <position position="86"/>
    </location>
    <ligand>
        <name>phosphate</name>
        <dbReference type="ChEBI" id="CHEBI:43474"/>
        <note>substrate</note>
    </ligand>
</feature>
<feature type="binding site" evidence="1">
    <location>
        <begin position="124"/>
        <end position="126"/>
    </location>
    <ligand>
        <name>phosphate</name>
        <dbReference type="ChEBI" id="CHEBI:43474"/>
        <note>substrate</note>
    </ligand>
</feature>
<gene>
    <name evidence="1" type="primary">rph</name>
    <name type="ordered locus">VC_0210</name>
</gene>
<name>RNPH_VIBCH</name>
<accession>Q9KVD6</accession>
<protein>
    <recommendedName>
        <fullName evidence="1">Ribonuclease PH</fullName>
        <shortName evidence="1">RNase PH</shortName>
        <ecNumber evidence="1">2.7.7.56</ecNumber>
    </recommendedName>
    <alternativeName>
        <fullName evidence="1">tRNA nucleotidyltransferase</fullName>
    </alternativeName>
</protein>
<reference key="1">
    <citation type="journal article" date="2000" name="Nature">
        <title>DNA sequence of both chromosomes of the cholera pathogen Vibrio cholerae.</title>
        <authorList>
            <person name="Heidelberg J.F."/>
            <person name="Eisen J.A."/>
            <person name="Nelson W.C."/>
            <person name="Clayton R.A."/>
            <person name="Gwinn M.L."/>
            <person name="Dodson R.J."/>
            <person name="Haft D.H."/>
            <person name="Hickey E.K."/>
            <person name="Peterson J.D."/>
            <person name="Umayam L.A."/>
            <person name="Gill S.R."/>
            <person name="Nelson K.E."/>
            <person name="Read T.D."/>
            <person name="Tettelin H."/>
            <person name="Richardson D.L."/>
            <person name="Ermolaeva M.D."/>
            <person name="Vamathevan J.J."/>
            <person name="Bass S."/>
            <person name="Qin H."/>
            <person name="Dragoi I."/>
            <person name="Sellers P."/>
            <person name="McDonald L.A."/>
            <person name="Utterback T.R."/>
            <person name="Fleischmann R.D."/>
            <person name="Nierman W.C."/>
            <person name="White O."/>
            <person name="Salzberg S.L."/>
            <person name="Smith H.O."/>
            <person name="Colwell R.R."/>
            <person name="Mekalanos J.J."/>
            <person name="Venter J.C."/>
            <person name="Fraser C.M."/>
        </authorList>
    </citation>
    <scope>NUCLEOTIDE SEQUENCE [LARGE SCALE GENOMIC DNA]</scope>
    <source>
        <strain>ATCC 39315 / El Tor Inaba N16961</strain>
    </source>
</reference>
<comment type="function">
    <text evidence="1">Phosphorolytic 3'-5' exoribonuclease that plays an important role in tRNA 3'-end maturation. Removes nucleotide residues following the 3'-CCA terminus of tRNAs; can also add nucleotides to the ends of RNA molecules by using nucleoside diphosphates as substrates, but this may not be physiologically important. Probably plays a role in initiation of 16S rRNA degradation (leading to ribosome degradation) during starvation.</text>
</comment>
<comment type="catalytic activity">
    <reaction evidence="1">
        <text>tRNA(n+1) + phosphate = tRNA(n) + a ribonucleoside 5'-diphosphate</text>
        <dbReference type="Rhea" id="RHEA:10628"/>
        <dbReference type="Rhea" id="RHEA-COMP:17343"/>
        <dbReference type="Rhea" id="RHEA-COMP:17344"/>
        <dbReference type="ChEBI" id="CHEBI:43474"/>
        <dbReference type="ChEBI" id="CHEBI:57930"/>
        <dbReference type="ChEBI" id="CHEBI:173114"/>
        <dbReference type="EC" id="2.7.7.56"/>
    </reaction>
</comment>
<comment type="subunit">
    <text evidence="1">Homohexameric ring arranged as a trimer of dimers.</text>
</comment>
<comment type="similarity">
    <text evidence="1">Belongs to the RNase PH family.</text>
</comment>
<comment type="sequence caution" evidence="2">
    <conflict type="erroneous initiation">
        <sequence resource="EMBL-CDS" id="AAF93386"/>
    </conflict>
    <text>Extended N-terminus.</text>
</comment>
<sequence>MRPDNRAADQVRPIKITRHYTAYAEGSVLVEFGNTKVLCNASIEEGVPRWLKGQGKGWVTAEYGMLPRATHSRTRREATNGKQGGRTMEIQRLIARSLRAVVDLEAMGEIMITVDCDVIQADGGTRTASITGASVALADAFAHLIAKGQLKKNPMKGHVAAVSVGILGEDVLCDLEYVEDSAADTDMNVVMTEEGKMIEIQGTAEGEPFSHEQLLELLAVAKKGIADIVAVQKASLLD</sequence>
<keyword id="KW-0548">Nucleotidyltransferase</keyword>
<keyword id="KW-1185">Reference proteome</keyword>
<keyword id="KW-0694">RNA-binding</keyword>
<keyword id="KW-0698">rRNA processing</keyword>
<keyword id="KW-0808">Transferase</keyword>
<keyword id="KW-0819">tRNA processing</keyword>
<keyword id="KW-0820">tRNA-binding</keyword>
<evidence type="ECO:0000255" key="1">
    <source>
        <dbReference type="HAMAP-Rule" id="MF_00564"/>
    </source>
</evidence>
<evidence type="ECO:0000305" key="2"/>
<proteinExistence type="inferred from homology"/>
<organism>
    <name type="scientific">Vibrio cholerae serotype O1 (strain ATCC 39315 / El Tor Inaba N16961)</name>
    <dbReference type="NCBI Taxonomy" id="243277"/>
    <lineage>
        <taxon>Bacteria</taxon>
        <taxon>Pseudomonadati</taxon>
        <taxon>Pseudomonadota</taxon>
        <taxon>Gammaproteobacteria</taxon>
        <taxon>Vibrionales</taxon>
        <taxon>Vibrionaceae</taxon>
        <taxon>Vibrio</taxon>
    </lineage>
</organism>
<dbReference type="EC" id="2.7.7.56" evidence="1"/>
<dbReference type="EMBL" id="AE003852">
    <property type="protein sequence ID" value="AAF93386.1"/>
    <property type="status" value="ALT_INIT"/>
    <property type="molecule type" value="Genomic_DNA"/>
</dbReference>
<dbReference type="PIR" id="D82350">
    <property type="entry name" value="D82350"/>
</dbReference>
<dbReference type="RefSeq" id="NP_229867.2">
    <property type="nucleotide sequence ID" value="NC_002505.1"/>
</dbReference>
<dbReference type="RefSeq" id="WP_001247175.1">
    <property type="nucleotide sequence ID" value="NZ_LT906614.1"/>
</dbReference>
<dbReference type="SMR" id="Q9KVD6"/>
<dbReference type="STRING" id="243277.VC_0210"/>
<dbReference type="DNASU" id="2614709"/>
<dbReference type="EnsemblBacteria" id="AAF93386">
    <property type="protein sequence ID" value="AAF93386"/>
    <property type="gene ID" value="VC_0210"/>
</dbReference>
<dbReference type="KEGG" id="vch:VC_0210"/>
<dbReference type="PATRIC" id="fig|243277.26.peg.191"/>
<dbReference type="eggNOG" id="COG0689">
    <property type="taxonomic scope" value="Bacteria"/>
</dbReference>
<dbReference type="HOGENOM" id="CLU_050858_0_0_6"/>
<dbReference type="Proteomes" id="UP000000584">
    <property type="component" value="Chromosome 1"/>
</dbReference>
<dbReference type="GO" id="GO:0000175">
    <property type="term" value="F:3'-5'-RNA exonuclease activity"/>
    <property type="evidence" value="ECO:0007669"/>
    <property type="project" value="UniProtKB-UniRule"/>
</dbReference>
<dbReference type="GO" id="GO:0003723">
    <property type="term" value="F:RNA binding"/>
    <property type="evidence" value="ECO:0000318"/>
    <property type="project" value="GO_Central"/>
</dbReference>
<dbReference type="GO" id="GO:0000049">
    <property type="term" value="F:tRNA binding"/>
    <property type="evidence" value="ECO:0007669"/>
    <property type="project" value="UniProtKB-UniRule"/>
</dbReference>
<dbReference type="GO" id="GO:0009022">
    <property type="term" value="F:tRNA nucleotidyltransferase activity"/>
    <property type="evidence" value="ECO:0007669"/>
    <property type="project" value="UniProtKB-UniRule"/>
</dbReference>
<dbReference type="GO" id="GO:0016075">
    <property type="term" value="P:rRNA catabolic process"/>
    <property type="evidence" value="ECO:0000318"/>
    <property type="project" value="GO_Central"/>
</dbReference>
<dbReference type="GO" id="GO:0006364">
    <property type="term" value="P:rRNA processing"/>
    <property type="evidence" value="ECO:0007669"/>
    <property type="project" value="UniProtKB-KW"/>
</dbReference>
<dbReference type="GO" id="GO:0008033">
    <property type="term" value="P:tRNA processing"/>
    <property type="evidence" value="ECO:0007669"/>
    <property type="project" value="UniProtKB-UniRule"/>
</dbReference>
<dbReference type="CDD" id="cd11362">
    <property type="entry name" value="RNase_PH_bact"/>
    <property type="match status" value="1"/>
</dbReference>
<dbReference type="FunFam" id="3.30.230.70:FF:000003">
    <property type="entry name" value="Ribonuclease PH"/>
    <property type="match status" value="1"/>
</dbReference>
<dbReference type="Gene3D" id="3.30.230.70">
    <property type="entry name" value="GHMP Kinase, N-terminal domain"/>
    <property type="match status" value="1"/>
</dbReference>
<dbReference type="HAMAP" id="MF_00564">
    <property type="entry name" value="RNase_PH"/>
    <property type="match status" value="1"/>
</dbReference>
<dbReference type="InterPro" id="IPR001247">
    <property type="entry name" value="ExoRNase_PH_dom1"/>
</dbReference>
<dbReference type="InterPro" id="IPR015847">
    <property type="entry name" value="ExoRNase_PH_dom2"/>
</dbReference>
<dbReference type="InterPro" id="IPR036345">
    <property type="entry name" value="ExoRNase_PH_dom2_sf"/>
</dbReference>
<dbReference type="InterPro" id="IPR027408">
    <property type="entry name" value="PNPase/RNase_PH_dom_sf"/>
</dbReference>
<dbReference type="InterPro" id="IPR020568">
    <property type="entry name" value="Ribosomal_Su5_D2-typ_SF"/>
</dbReference>
<dbReference type="InterPro" id="IPR050080">
    <property type="entry name" value="RNase_PH"/>
</dbReference>
<dbReference type="InterPro" id="IPR002381">
    <property type="entry name" value="RNase_PH_bac-type"/>
</dbReference>
<dbReference type="InterPro" id="IPR018336">
    <property type="entry name" value="RNase_PH_CS"/>
</dbReference>
<dbReference type="NCBIfam" id="TIGR01966">
    <property type="entry name" value="RNasePH"/>
    <property type="match status" value="1"/>
</dbReference>
<dbReference type="PANTHER" id="PTHR11953">
    <property type="entry name" value="EXOSOME COMPLEX COMPONENT"/>
    <property type="match status" value="1"/>
</dbReference>
<dbReference type="PANTHER" id="PTHR11953:SF0">
    <property type="entry name" value="EXOSOME COMPLEX COMPONENT RRP41"/>
    <property type="match status" value="1"/>
</dbReference>
<dbReference type="Pfam" id="PF01138">
    <property type="entry name" value="RNase_PH"/>
    <property type="match status" value="1"/>
</dbReference>
<dbReference type="Pfam" id="PF03725">
    <property type="entry name" value="RNase_PH_C"/>
    <property type="match status" value="1"/>
</dbReference>
<dbReference type="SUPFAM" id="SSF55666">
    <property type="entry name" value="Ribonuclease PH domain 2-like"/>
    <property type="match status" value="1"/>
</dbReference>
<dbReference type="SUPFAM" id="SSF54211">
    <property type="entry name" value="Ribosomal protein S5 domain 2-like"/>
    <property type="match status" value="1"/>
</dbReference>
<dbReference type="PROSITE" id="PS01277">
    <property type="entry name" value="RIBONUCLEASE_PH"/>
    <property type="match status" value="1"/>
</dbReference>